<evidence type="ECO:0000255" key="1">
    <source>
        <dbReference type="PROSITE-ProRule" id="PRU00555"/>
    </source>
</evidence>
<evidence type="ECO:0000269" key="2">
    <source>
    </source>
</evidence>
<evidence type="ECO:0000269" key="3">
    <source>
    </source>
</evidence>
<evidence type="ECO:0000269" key="4">
    <source>
    </source>
</evidence>
<evidence type="ECO:0000269" key="5">
    <source>
    </source>
</evidence>
<evidence type="ECO:0000269" key="6">
    <source>
    </source>
</evidence>
<evidence type="ECO:0000269" key="7">
    <source>
    </source>
</evidence>
<evidence type="ECO:0000269" key="8">
    <source>
    </source>
</evidence>
<evidence type="ECO:0000269" key="9">
    <source>
    </source>
</evidence>
<evidence type="ECO:0000269" key="10">
    <source>
    </source>
</evidence>
<evidence type="ECO:0000269" key="11">
    <source>
    </source>
</evidence>
<evidence type="ECO:0000269" key="12">
    <source ref="3"/>
</evidence>
<evidence type="ECO:0000269" key="13">
    <source ref="5"/>
</evidence>
<evidence type="ECO:0000269" key="14">
    <source ref="9"/>
</evidence>
<evidence type="ECO:0000303" key="15">
    <source>
    </source>
</evidence>
<evidence type="ECO:0000305" key="16"/>
<evidence type="ECO:0000305" key="17">
    <source>
    </source>
</evidence>
<evidence type="ECO:0000305" key="18">
    <source>
    </source>
</evidence>
<evidence type="ECO:0000305" key="19">
    <source>
    </source>
</evidence>
<evidence type="ECO:0000305" key="20">
    <source>
    </source>
</evidence>
<evidence type="ECO:0000305" key="21">
    <source>
    </source>
</evidence>
<evidence type="ECO:0000305" key="22">
    <source>
    </source>
</evidence>
<evidence type="ECO:0007744" key="23">
    <source>
    </source>
</evidence>
<keyword id="KW-0025">Alternative splicing</keyword>
<keyword id="KW-1003">Cell membrane</keyword>
<keyword id="KW-0256">Endoplasmic reticulum</keyword>
<keyword id="KW-0945">Host-virus interaction</keyword>
<keyword id="KW-0378">Hydrolase</keyword>
<keyword id="KW-0551">Lipid droplet</keyword>
<keyword id="KW-0443">Lipid metabolism</keyword>
<keyword id="KW-0449">Lipoprotein</keyword>
<keyword id="KW-0472">Membrane</keyword>
<keyword id="KW-0488">Methylation</keyword>
<keyword id="KW-0496">Mitochondrion</keyword>
<keyword id="KW-1208">Phospholipid metabolism</keyword>
<keyword id="KW-0597">Phosphoprotein</keyword>
<keyword id="KW-0636">Prenylation</keyword>
<keyword id="KW-1267">Proteomics identification</keyword>
<keyword id="KW-1185">Reference proteome</keyword>
<keyword id="KW-0808">Transferase</keyword>
<name>PA24C_HUMAN</name>
<feature type="chain" id="PRO_0000022995" description="Cytosolic phospholipase A2 gamma">
    <location>
        <begin position="1"/>
        <end position="538"/>
    </location>
</feature>
<feature type="propeptide" id="PRO_0000022996" description="Removed in mature form">
    <location>
        <begin position="539"/>
        <end position="541"/>
    </location>
</feature>
<feature type="domain" description="PLA2c" evidence="1">
    <location>
        <begin position="1"/>
        <end position="541"/>
    </location>
</feature>
<feature type="region of interest" description="Required for lipid droplet localization" evidence="9">
    <location>
        <begin position="260"/>
        <end position="292"/>
    </location>
</feature>
<feature type="active site" description="Nucleophile" evidence="17">
    <location>
        <position position="82"/>
    </location>
</feature>
<feature type="active site" description="Proton acceptor" evidence="17">
    <location>
        <position position="385"/>
    </location>
</feature>
<feature type="modified residue" description="Phosphoserine" evidence="23">
    <location>
        <position position="337"/>
    </location>
</feature>
<feature type="modified residue" description="Cysteine methyl ester" evidence="4 22">
    <location>
        <position position="538"/>
    </location>
</feature>
<feature type="lipid moiety-binding region" description="S-farnesyl cysteine" evidence="4 22">
    <location>
        <position position="538"/>
    </location>
</feature>
<feature type="splice variant" id="VSP_045849" description="In isoform 3." evidence="15">
    <original>MGSSEVSIIPGLQ</original>
    <variation>MRTRPRPRLRRTENFLTAVHHGK</variation>
    <location>
        <begin position="1"/>
        <end position="13"/>
    </location>
</feature>
<feature type="splice variant" id="VSP_045850" description="In isoform 2." evidence="16">
    <location>
        <begin position="528"/>
        <end position="541"/>
    </location>
</feature>
<feature type="sequence variant" id="VAR_018761" description="In dbSNP:rs11564522." evidence="12">
    <original>E</original>
    <variation>K</variation>
    <location>
        <position position="21"/>
    </location>
</feature>
<feature type="sequence variant" id="VAR_018420" description="In dbSNP:rs2307279." evidence="12">
    <original>A</original>
    <variation>P</variation>
    <location>
        <position position="38"/>
    </location>
</feature>
<feature type="sequence variant" id="VAR_018762" description="In dbSNP:rs11564532." evidence="12">
    <original>A</original>
    <variation>V</variation>
    <location>
        <position position="127"/>
    </location>
</feature>
<feature type="sequence variant" id="VAR_018763" description="In dbSNP:rs11564534." evidence="12">
    <original>V</original>
    <variation>F</variation>
    <location>
        <position position="142"/>
    </location>
</feature>
<feature type="sequence variant" id="VAR_018421" description="In dbSNP:rs2303744." evidence="5 12">
    <original>I</original>
    <variation>V</variation>
    <location>
        <position position="143"/>
    </location>
</feature>
<feature type="sequence variant" id="VAR_018764" description="In dbSNP:rs2307282." evidence="12">
    <original>R</original>
    <variation>G</variation>
    <location>
        <position position="148"/>
    </location>
</feature>
<feature type="sequence variant" id="VAR_018765" description="In dbSNP:rs11564538." evidence="12">
    <original>P</original>
    <variation>L</variation>
    <location>
        <position position="151"/>
    </location>
</feature>
<feature type="sequence variant" id="VAR_018422" description="In dbSNP:rs156631." evidence="2 5 12 13">
    <original>S</original>
    <variation>P</variation>
    <location>
        <position position="203"/>
    </location>
</feature>
<feature type="sequence variant" id="VAR_018766" description="In dbSNP:rs11564541." evidence="12">
    <original>T</original>
    <variation>S</variation>
    <location>
        <position position="226"/>
    </location>
</feature>
<feature type="sequence variant" id="VAR_018767" description="In dbSNP:rs11564620." evidence="12">
    <original>T</original>
    <variation>P</variation>
    <location>
        <position position="360"/>
    </location>
</feature>
<feature type="sequence variant" id="VAR_018768" description="In dbSNP:rs11564638." evidence="12">
    <original>D</original>
    <variation>N</variation>
    <location>
        <position position="411"/>
    </location>
</feature>
<feature type="sequence variant" id="VAR_018423" description="In dbSNP:rs191276960." evidence="14">
    <original>R</original>
    <variation>C</variation>
    <location>
        <position position="430"/>
    </location>
</feature>
<feature type="mutagenesis site" description="Abolishes enzyme activity. Reduces lipid droplet formation; when associated with A-82; A-385 and A-402." evidence="2 9">
    <original>R</original>
    <variation>A</variation>
    <location>
        <position position="54"/>
    </location>
</feature>
<feature type="mutagenesis site" description="Abolishes enzyme activity. Reduces lipid droplet formation; when associated with A-54; A-385 and A-402." evidence="2 9">
    <original>S</original>
    <variation>A</variation>
    <location>
        <position position="82"/>
    </location>
</feature>
<feature type="mutagenesis site" description="Abolishes enzyme activity. Reduces lipid droplet formation; when associated with A-54; A-82 and A-402." evidence="2 9">
    <original>D</original>
    <variation>A</variation>
    <location>
        <position position="385"/>
    </location>
</feature>
<feature type="mutagenesis site" description="Abolishes enzyme activity. Reduces lipid droplet formation; when associated with A-54; A-82 and A-385." evidence="2 9">
    <original>R</original>
    <variation>A</variation>
    <location>
        <position position="402"/>
    </location>
</feature>
<feature type="mutagenesis site" description="Loss of prenylation." evidence="11">
    <original>CC</original>
    <variation>SS</variation>
    <location>
        <begin position="538"/>
        <end position="539"/>
    </location>
</feature>
<feature type="mutagenesis site" description="Has no effect on membrane localization. Decreases the affinity for 1-O-hexadecyl-sn-glycero-3-phosphocholine acyl acceptor in transacylation reaction." evidence="6 7">
    <original>C</original>
    <variation>S</variation>
    <location>
        <position position="538"/>
    </location>
</feature>
<feature type="sequence conflict" description="In Ref. 4; BAG58352." evidence="16" ref="4">
    <original>R</original>
    <variation>G</variation>
    <location>
        <position position="24"/>
    </location>
</feature>
<feature type="sequence conflict" description="In Ref. 1; AAC32823." evidence="16" ref="1">
    <original>M</original>
    <variation>I</variation>
    <location>
        <position position="465"/>
    </location>
</feature>
<feature type="sequence conflict" description="In Ref. 5; CAG33097." evidence="16" ref="5">
    <original>E</original>
    <variation>G</variation>
    <location>
        <position position="480"/>
    </location>
</feature>
<dbReference type="EC" id="3.1.1.4" evidence="2 3 4 11"/>
<dbReference type="EC" id="3.1.1.5" evidence="4 6 7"/>
<dbReference type="EC" id="2.3.1.-" evidence="7"/>
<dbReference type="EMBL" id="AF058921">
    <property type="protein sequence ID" value="AAC32823.1"/>
    <property type="molecule type" value="mRNA"/>
</dbReference>
<dbReference type="EMBL" id="AF065214">
    <property type="protein sequence ID" value="AAC78835.1"/>
    <property type="molecule type" value="mRNA"/>
</dbReference>
<dbReference type="EMBL" id="AY485310">
    <property type="protein sequence ID" value="AAR25453.1"/>
    <property type="molecule type" value="Genomic_DNA"/>
</dbReference>
<dbReference type="EMBL" id="AK295400">
    <property type="protein sequence ID" value="BAG58352.1"/>
    <property type="molecule type" value="mRNA"/>
</dbReference>
<dbReference type="EMBL" id="AK314524">
    <property type="protein sequence ID" value="BAG37118.1"/>
    <property type="molecule type" value="mRNA"/>
</dbReference>
<dbReference type="EMBL" id="CR456816">
    <property type="protein sequence ID" value="CAG33097.1"/>
    <property type="molecule type" value="mRNA"/>
</dbReference>
<dbReference type="EMBL" id="AC010458">
    <property type="status" value="NOT_ANNOTATED_CDS"/>
    <property type="molecule type" value="Genomic_DNA"/>
</dbReference>
<dbReference type="EMBL" id="AC011466">
    <property type="status" value="NOT_ANNOTATED_CDS"/>
    <property type="molecule type" value="Genomic_DNA"/>
</dbReference>
<dbReference type="EMBL" id="CH471177">
    <property type="protein sequence ID" value="EAW52314.1"/>
    <property type="molecule type" value="Genomic_DNA"/>
</dbReference>
<dbReference type="EMBL" id="BC063416">
    <property type="protein sequence ID" value="AAH63416.1"/>
    <property type="molecule type" value="mRNA"/>
</dbReference>
<dbReference type="EMBL" id="AB105807">
    <property type="protein sequence ID" value="BAC87745.1"/>
    <property type="molecule type" value="Genomic_DNA"/>
</dbReference>
<dbReference type="EMBL" id="AL050193">
    <property type="protein sequence ID" value="CAB43312.3"/>
    <property type="molecule type" value="mRNA"/>
</dbReference>
<dbReference type="CCDS" id="CCDS12710.1">
    <molecule id="Q9UP65-1"/>
</dbReference>
<dbReference type="CCDS" id="CCDS54286.1">
    <molecule id="Q9UP65-2"/>
</dbReference>
<dbReference type="CCDS" id="CCDS59403.1">
    <molecule id="Q9UP65-3"/>
</dbReference>
<dbReference type="PIR" id="T13162">
    <property type="entry name" value="T13162"/>
</dbReference>
<dbReference type="RefSeq" id="NP_001152794.1">
    <molecule id="Q9UP65-3"/>
    <property type="nucleotide sequence ID" value="NM_001159322.2"/>
</dbReference>
<dbReference type="RefSeq" id="NP_001152795.1">
    <molecule id="Q9UP65-2"/>
    <property type="nucleotide sequence ID" value="NM_001159323.2"/>
</dbReference>
<dbReference type="RefSeq" id="NP_003697.2">
    <molecule id="Q9UP65-1"/>
    <property type="nucleotide sequence ID" value="NM_003706.3"/>
</dbReference>
<dbReference type="SMR" id="Q9UP65"/>
<dbReference type="BioGRID" id="114165">
    <property type="interactions" value="12"/>
</dbReference>
<dbReference type="FunCoup" id="Q9UP65">
    <property type="interactions" value="926"/>
</dbReference>
<dbReference type="IntAct" id="Q9UP65">
    <property type="interactions" value="1"/>
</dbReference>
<dbReference type="STRING" id="9606.ENSP00000472546"/>
<dbReference type="BindingDB" id="Q9UP65"/>
<dbReference type="ChEMBL" id="CHEMBL4834"/>
<dbReference type="SwissLipids" id="SLP:000000888"/>
<dbReference type="SwissLipids" id="SLP:000001081">
    <molecule id="Q9UP65-1"/>
</dbReference>
<dbReference type="iPTMnet" id="Q9UP65"/>
<dbReference type="PhosphoSitePlus" id="Q9UP65"/>
<dbReference type="SwissPalm" id="Q9UP65"/>
<dbReference type="BioMuta" id="PLA2G4C"/>
<dbReference type="DMDM" id="322510066"/>
<dbReference type="jPOST" id="Q9UP65"/>
<dbReference type="MassIVE" id="Q9UP65"/>
<dbReference type="PaxDb" id="9606-ENSP00000472546"/>
<dbReference type="PeptideAtlas" id="Q9UP65"/>
<dbReference type="ProteomicsDB" id="85355">
    <molecule id="Q9UP65-1"/>
</dbReference>
<dbReference type="Pumba" id="Q9UP65"/>
<dbReference type="Antibodypedia" id="31649">
    <property type="antibodies" value="116 antibodies from 27 providers"/>
</dbReference>
<dbReference type="DNASU" id="8605"/>
<dbReference type="Ensembl" id="ENST00000354276.7">
    <molecule id="Q9UP65-2"/>
    <property type="protein sequence ID" value="ENSP00000346228.2"/>
    <property type="gene ID" value="ENSG00000105499.14"/>
</dbReference>
<dbReference type="Ensembl" id="ENST00000599111.5">
    <molecule id="Q9UP65-3"/>
    <property type="protein sequence ID" value="ENSP00000472546.1"/>
    <property type="gene ID" value="ENSG00000105499.14"/>
</dbReference>
<dbReference type="Ensembl" id="ENST00000599921.6">
    <molecule id="Q9UP65-1"/>
    <property type="protein sequence ID" value="ENSP00000469473.1"/>
    <property type="gene ID" value="ENSG00000105499.14"/>
</dbReference>
<dbReference type="GeneID" id="8605"/>
<dbReference type="KEGG" id="hsa:8605"/>
<dbReference type="MANE-Select" id="ENST00000599921.6">
    <property type="protein sequence ID" value="ENSP00000469473.1"/>
    <property type="RefSeq nucleotide sequence ID" value="NM_003706.3"/>
    <property type="RefSeq protein sequence ID" value="NP_003697.2"/>
</dbReference>
<dbReference type="UCSC" id="uc002phx.4">
    <molecule id="Q9UP65-1"/>
    <property type="organism name" value="human"/>
</dbReference>
<dbReference type="AGR" id="HGNC:9037"/>
<dbReference type="CTD" id="8605"/>
<dbReference type="DisGeNET" id="8605"/>
<dbReference type="GeneCards" id="PLA2G4C"/>
<dbReference type="HGNC" id="HGNC:9037">
    <property type="gene designation" value="PLA2G4C"/>
</dbReference>
<dbReference type="HPA" id="ENSG00000105499">
    <property type="expression patterns" value="Tissue enhanced (retina, skeletal muscle)"/>
</dbReference>
<dbReference type="MIM" id="603602">
    <property type="type" value="gene"/>
</dbReference>
<dbReference type="neXtProt" id="NX_Q9UP65"/>
<dbReference type="OpenTargets" id="ENSG00000105499"/>
<dbReference type="PharmGKB" id="PA33365"/>
<dbReference type="VEuPathDB" id="HostDB:ENSG00000105499"/>
<dbReference type="eggNOG" id="KOG1325">
    <property type="taxonomic scope" value="Eukaryota"/>
</dbReference>
<dbReference type="GeneTree" id="ENSGT01030000234606"/>
<dbReference type="HOGENOM" id="CLU_011663_2_0_1"/>
<dbReference type="InParanoid" id="Q9UP65"/>
<dbReference type="OMA" id="LYYPKRY"/>
<dbReference type="OrthoDB" id="270970at2759"/>
<dbReference type="PAN-GO" id="Q9UP65">
    <property type="GO annotations" value="7 GO annotations based on evolutionary models"/>
</dbReference>
<dbReference type="PhylomeDB" id="Q9UP65"/>
<dbReference type="TreeFam" id="TF325228"/>
<dbReference type="PathwayCommons" id="Q9UP65"/>
<dbReference type="Reactome" id="R-HSA-1482788">
    <property type="pathway name" value="Acyl chain remodelling of PC"/>
</dbReference>
<dbReference type="Reactome" id="R-HSA-1482839">
    <property type="pathway name" value="Acyl chain remodelling of PE"/>
</dbReference>
<dbReference type="Reactome" id="R-HSA-1482922">
    <property type="pathway name" value="Acyl chain remodelling of PI"/>
</dbReference>
<dbReference type="Reactome" id="R-HSA-1483115">
    <property type="pathway name" value="Hydrolysis of LPC"/>
</dbReference>
<dbReference type="Reactome" id="R-HSA-1483152">
    <property type="pathway name" value="Hydrolysis of LPE"/>
</dbReference>
<dbReference type="SignaLink" id="Q9UP65"/>
<dbReference type="BioGRID-ORCS" id="8605">
    <property type="hits" value="11 hits in 1155 CRISPR screens"/>
</dbReference>
<dbReference type="ChiTaRS" id="PLA2G4C">
    <property type="organism name" value="human"/>
</dbReference>
<dbReference type="GeneWiki" id="PLA2G4C"/>
<dbReference type="GenomeRNAi" id="8605"/>
<dbReference type="Pharos" id="Q9UP65">
    <property type="development level" value="Tchem"/>
</dbReference>
<dbReference type="PRO" id="PR:Q9UP65"/>
<dbReference type="Proteomes" id="UP000005640">
    <property type="component" value="Chromosome 19"/>
</dbReference>
<dbReference type="RNAct" id="Q9UP65">
    <property type="molecule type" value="protein"/>
</dbReference>
<dbReference type="Bgee" id="ENSG00000105499">
    <property type="expression patterns" value="Expressed in gluteal muscle and 178 other cell types or tissues"/>
</dbReference>
<dbReference type="ExpressionAtlas" id="Q9UP65">
    <property type="expression patterns" value="baseline and differential"/>
</dbReference>
<dbReference type="GO" id="GO:0005938">
    <property type="term" value="C:cell cortex"/>
    <property type="evidence" value="ECO:0007669"/>
    <property type="project" value="Ensembl"/>
</dbReference>
<dbReference type="GO" id="GO:0005829">
    <property type="term" value="C:cytosol"/>
    <property type="evidence" value="ECO:0000318"/>
    <property type="project" value="GO_Central"/>
</dbReference>
<dbReference type="GO" id="GO:0005789">
    <property type="term" value="C:endoplasmic reticulum membrane"/>
    <property type="evidence" value="ECO:0000314"/>
    <property type="project" value="UniProtKB"/>
</dbReference>
<dbReference type="GO" id="GO:0005811">
    <property type="term" value="C:lipid droplet"/>
    <property type="evidence" value="ECO:0000314"/>
    <property type="project" value="UniProtKB"/>
</dbReference>
<dbReference type="GO" id="GO:0016020">
    <property type="term" value="C:membrane"/>
    <property type="evidence" value="ECO:0000304"/>
    <property type="project" value="UniProtKB"/>
</dbReference>
<dbReference type="GO" id="GO:0031966">
    <property type="term" value="C:mitochondrial membrane"/>
    <property type="evidence" value="ECO:0000314"/>
    <property type="project" value="UniProtKB"/>
</dbReference>
<dbReference type="GO" id="GO:0005635">
    <property type="term" value="C:nuclear envelope"/>
    <property type="evidence" value="ECO:0000318"/>
    <property type="project" value="GO_Central"/>
</dbReference>
<dbReference type="GO" id="GO:0005654">
    <property type="term" value="C:nucleoplasm"/>
    <property type="evidence" value="ECO:0000318"/>
    <property type="project" value="GO_Central"/>
</dbReference>
<dbReference type="GO" id="GO:0005886">
    <property type="term" value="C:plasma membrane"/>
    <property type="evidence" value="ECO:0007669"/>
    <property type="project" value="UniProtKB-SubCell"/>
</dbReference>
<dbReference type="GO" id="GO:0005509">
    <property type="term" value="F:calcium ion binding"/>
    <property type="evidence" value="ECO:0000318"/>
    <property type="project" value="GO_Central"/>
</dbReference>
<dbReference type="GO" id="GO:0047498">
    <property type="term" value="F:calcium-dependent phospholipase A2 activity"/>
    <property type="evidence" value="ECO:0000318"/>
    <property type="project" value="GO_Central"/>
</dbReference>
<dbReference type="GO" id="GO:0005544">
    <property type="term" value="F:calcium-dependent phospholipid binding"/>
    <property type="evidence" value="ECO:0000318"/>
    <property type="project" value="GO_Central"/>
</dbReference>
<dbReference type="GO" id="GO:0047499">
    <property type="term" value="F:calcium-independent phospholipase A2 activity"/>
    <property type="evidence" value="ECO:0000314"/>
    <property type="project" value="UniProtKB"/>
</dbReference>
<dbReference type="GO" id="GO:0004622">
    <property type="term" value="F:lysophospholipase activity"/>
    <property type="evidence" value="ECO:0000314"/>
    <property type="project" value="UniProtKB"/>
</dbReference>
<dbReference type="GO" id="GO:0008374">
    <property type="term" value="F:O-acyltransferase activity"/>
    <property type="evidence" value="ECO:0000314"/>
    <property type="project" value="UniProtKB"/>
</dbReference>
<dbReference type="GO" id="GO:0008970">
    <property type="term" value="F:phospholipase A1 activity"/>
    <property type="evidence" value="ECO:0000304"/>
    <property type="project" value="Reactome"/>
</dbReference>
<dbReference type="GO" id="GO:0005543">
    <property type="term" value="F:phospholipid binding"/>
    <property type="evidence" value="ECO:0000303"/>
    <property type="project" value="UniProtKB"/>
</dbReference>
<dbReference type="GO" id="GO:0019369">
    <property type="term" value="P:arachidonate metabolic process"/>
    <property type="evidence" value="ECO:0000303"/>
    <property type="project" value="UniProtKB"/>
</dbReference>
<dbReference type="GO" id="GO:0046475">
    <property type="term" value="P:glycerophospholipid catabolic process"/>
    <property type="evidence" value="ECO:0000314"/>
    <property type="project" value="UniProtKB"/>
</dbReference>
<dbReference type="GO" id="GO:0006954">
    <property type="term" value="P:inflammatory response"/>
    <property type="evidence" value="ECO:0000303"/>
    <property type="project" value="UniProtKB"/>
</dbReference>
<dbReference type="GO" id="GO:0035556">
    <property type="term" value="P:intracellular signal transduction"/>
    <property type="evidence" value="ECO:0000303"/>
    <property type="project" value="UniProtKB"/>
</dbReference>
<dbReference type="GO" id="GO:0140042">
    <property type="term" value="P:lipid droplet formation"/>
    <property type="evidence" value="ECO:0000315"/>
    <property type="project" value="UniProtKB"/>
</dbReference>
<dbReference type="GO" id="GO:0007567">
    <property type="term" value="P:parturition"/>
    <property type="evidence" value="ECO:0000303"/>
    <property type="project" value="UniProtKB"/>
</dbReference>
<dbReference type="GO" id="GO:0036151">
    <property type="term" value="P:phosphatidylcholine acyl-chain remodeling"/>
    <property type="evidence" value="ECO:0000314"/>
    <property type="project" value="UniProtKB"/>
</dbReference>
<dbReference type="GO" id="GO:0036152">
    <property type="term" value="P:phosphatidylethanolamine acyl-chain remodeling"/>
    <property type="evidence" value="ECO:0000314"/>
    <property type="project" value="UniProtKB"/>
</dbReference>
<dbReference type="GO" id="GO:0006644">
    <property type="term" value="P:phospholipid metabolic process"/>
    <property type="evidence" value="ECO:0000304"/>
    <property type="project" value="UniProtKB"/>
</dbReference>
<dbReference type="GO" id="GO:0006663">
    <property type="term" value="P:platelet activating factor biosynthetic process"/>
    <property type="evidence" value="ECO:0000314"/>
    <property type="project" value="UniProtKB"/>
</dbReference>
<dbReference type="CDD" id="cd07202">
    <property type="entry name" value="cPLA2_Grp-IVC"/>
    <property type="match status" value="1"/>
</dbReference>
<dbReference type="Gene3D" id="3.40.1090.10">
    <property type="entry name" value="Cytosolic phospholipase A2 catalytic domain"/>
    <property type="match status" value="1"/>
</dbReference>
<dbReference type="InterPro" id="IPR016035">
    <property type="entry name" value="Acyl_Trfase/lysoPLipase"/>
</dbReference>
<dbReference type="InterPro" id="IPR002642">
    <property type="entry name" value="LysoPLipase_cat_dom"/>
</dbReference>
<dbReference type="PANTHER" id="PTHR10728">
    <property type="entry name" value="CYTOSOLIC PHOSPHOLIPASE A2"/>
    <property type="match status" value="1"/>
</dbReference>
<dbReference type="PANTHER" id="PTHR10728:SF39">
    <property type="entry name" value="CYTOSOLIC PHOSPHOLIPASE A2 GAMMA"/>
    <property type="match status" value="1"/>
</dbReference>
<dbReference type="Pfam" id="PF01735">
    <property type="entry name" value="PLA2_B"/>
    <property type="match status" value="1"/>
</dbReference>
<dbReference type="SMART" id="SM00022">
    <property type="entry name" value="PLAc"/>
    <property type="match status" value="1"/>
</dbReference>
<dbReference type="SUPFAM" id="SSF52151">
    <property type="entry name" value="FabD/lysophospholipase-like"/>
    <property type="match status" value="1"/>
</dbReference>
<dbReference type="PROSITE" id="PS51210">
    <property type="entry name" value="PLA2C"/>
    <property type="match status" value="1"/>
</dbReference>
<proteinExistence type="evidence at protein level"/>
<gene>
    <name type="primary">PLA2G4C</name>
</gene>
<reference key="1">
    <citation type="journal article" date="1998" name="J. Biol. Chem.">
        <title>A novel calcium-independent phospholipase A2, cPLA2-gamma, that is prenylated and contains homology to cPLA2.</title>
        <authorList>
            <person name="Underwood K.W."/>
            <person name="Song C."/>
            <person name="Kriz R.W."/>
            <person name="Chang X.J."/>
            <person name="Knopf J.L."/>
            <person name="Lin L.L."/>
        </authorList>
    </citation>
    <scope>NUCLEOTIDE SEQUENCE [MRNA] (ISOFORM 1)</scope>
    <scope>FUNCTION</scope>
    <scope>CATALYTIC ACTIVITY</scope>
    <scope>ACTIVITY REGULATION</scope>
    <scope>SUBCELLULAR LOCATION</scope>
    <scope>TISSUE SPECIFICITY</scope>
    <scope>ISOPRENYLATION AT CYS-538</scope>
    <scope>MUTAGENESIS OF 538-CYS-CYS-539</scope>
    <source>
        <tissue>Skeletal muscle</tissue>
    </source>
</reference>
<reference key="2">
    <citation type="journal article" date="1999" name="J. Biol. Chem.">
        <title>Molecular cloning of two new human paralogs of 85-kDa cytosolic phospholipase A2.</title>
        <authorList>
            <person name="Pickard R.T."/>
            <person name="Strifler B.A."/>
            <person name="Kramer R.M."/>
            <person name="Sharp J.D."/>
        </authorList>
    </citation>
    <scope>NUCLEOTIDE SEQUENCE [MRNA] (ISOFORM 1)</scope>
    <scope>FUNCTION</scope>
    <scope>CATALYTIC ACTIVITY</scope>
    <scope>BIOPHYSICOCHEMICAL PROPERTIES</scope>
    <scope>ACTIVITY REGULATION</scope>
    <scope>SUBCELLULAR LOCATION</scope>
    <scope>TISSUE SPECIFICITY</scope>
    <scope>MUTAGENESIS OF ARG-54; SER-82; ASP-385 AND ARG-402</scope>
    <scope>VARIANT PRO-203</scope>
</reference>
<reference key="3">
    <citation type="submission" date="2003-11" db="EMBL/GenBank/DDBJ databases">
        <authorList>
            <consortium name="NIEHS SNPs program"/>
        </authorList>
    </citation>
    <scope>NUCLEOTIDE SEQUENCE [GENOMIC DNA]</scope>
    <scope>VARIANTS LYS-21; PRO-38; VAL-127; PHE-142; VAL-143; GLY-148; LEU-151; PRO-203; SER-226; PRO-360 AND ASN-411</scope>
</reference>
<reference key="4">
    <citation type="journal article" date="2004" name="Nat. Genet.">
        <title>Complete sequencing and characterization of 21,243 full-length human cDNAs.</title>
        <authorList>
            <person name="Ota T."/>
            <person name="Suzuki Y."/>
            <person name="Nishikawa T."/>
            <person name="Otsuki T."/>
            <person name="Sugiyama T."/>
            <person name="Irie R."/>
            <person name="Wakamatsu A."/>
            <person name="Hayashi K."/>
            <person name="Sato H."/>
            <person name="Nagai K."/>
            <person name="Kimura K."/>
            <person name="Makita H."/>
            <person name="Sekine M."/>
            <person name="Obayashi M."/>
            <person name="Nishi T."/>
            <person name="Shibahara T."/>
            <person name="Tanaka T."/>
            <person name="Ishii S."/>
            <person name="Yamamoto J."/>
            <person name="Saito K."/>
            <person name="Kawai Y."/>
            <person name="Isono Y."/>
            <person name="Nakamura Y."/>
            <person name="Nagahari K."/>
            <person name="Murakami K."/>
            <person name="Yasuda T."/>
            <person name="Iwayanagi T."/>
            <person name="Wagatsuma M."/>
            <person name="Shiratori A."/>
            <person name="Sudo H."/>
            <person name="Hosoiri T."/>
            <person name="Kaku Y."/>
            <person name="Kodaira H."/>
            <person name="Kondo H."/>
            <person name="Sugawara M."/>
            <person name="Takahashi M."/>
            <person name="Kanda K."/>
            <person name="Yokoi T."/>
            <person name="Furuya T."/>
            <person name="Kikkawa E."/>
            <person name="Omura Y."/>
            <person name="Abe K."/>
            <person name="Kamihara K."/>
            <person name="Katsuta N."/>
            <person name="Sato K."/>
            <person name="Tanikawa M."/>
            <person name="Yamazaki M."/>
            <person name="Ninomiya K."/>
            <person name="Ishibashi T."/>
            <person name="Yamashita H."/>
            <person name="Murakawa K."/>
            <person name="Fujimori K."/>
            <person name="Tanai H."/>
            <person name="Kimata M."/>
            <person name="Watanabe M."/>
            <person name="Hiraoka S."/>
            <person name="Chiba Y."/>
            <person name="Ishida S."/>
            <person name="Ono Y."/>
            <person name="Takiguchi S."/>
            <person name="Watanabe S."/>
            <person name="Yosida M."/>
            <person name="Hotuta T."/>
            <person name="Kusano J."/>
            <person name="Kanehori K."/>
            <person name="Takahashi-Fujii A."/>
            <person name="Hara H."/>
            <person name="Tanase T.-O."/>
            <person name="Nomura Y."/>
            <person name="Togiya S."/>
            <person name="Komai F."/>
            <person name="Hara R."/>
            <person name="Takeuchi K."/>
            <person name="Arita M."/>
            <person name="Imose N."/>
            <person name="Musashino K."/>
            <person name="Yuuki H."/>
            <person name="Oshima A."/>
            <person name="Sasaki N."/>
            <person name="Aotsuka S."/>
            <person name="Yoshikawa Y."/>
            <person name="Matsunawa H."/>
            <person name="Ichihara T."/>
            <person name="Shiohata N."/>
            <person name="Sano S."/>
            <person name="Moriya S."/>
            <person name="Momiyama H."/>
            <person name="Satoh N."/>
            <person name="Takami S."/>
            <person name="Terashima Y."/>
            <person name="Suzuki O."/>
            <person name="Nakagawa S."/>
            <person name="Senoh A."/>
            <person name="Mizoguchi H."/>
            <person name="Goto Y."/>
            <person name="Shimizu F."/>
            <person name="Wakebe H."/>
            <person name="Hishigaki H."/>
            <person name="Watanabe T."/>
            <person name="Sugiyama A."/>
            <person name="Takemoto M."/>
            <person name="Kawakami B."/>
            <person name="Yamazaki M."/>
            <person name="Watanabe K."/>
            <person name="Kumagai A."/>
            <person name="Itakura S."/>
            <person name="Fukuzumi Y."/>
            <person name="Fujimori Y."/>
            <person name="Komiyama M."/>
            <person name="Tashiro H."/>
            <person name="Tanigami A."/>
            <person name="Fujiwara T."/>
            <person name="Ono T."/>
            <person name="Yamada K."/>
            <person name="Fujii Y."/>
            <person name="Ozaki K."/>
            <person name="Hirao M."/>
            <person name="Ohmori Y."/>
            <person name="Kawabata A."/>
            <person name="Hikiji T."/>
            <person name="Kobatake N."/>
            <person name="Inagaki H."/>
            <person name="Ikema Y."/>
            <person name="Okamoto S."/>
            <person name="Okitani R."/>
            <person name="Kawakami T."/>
            <person name="Noguchi S."/>
            <person name="Itoh T."/>
            <person name="Shigeta K."/>
            <person name="Senba T."/>
            <person name="Matsumura K."/>
            <person name="Nakajima Y."/>
            <person name="Mizuno T."/>
            <person name="Morinaga M."/>
            <person name="Sasaki M."/>
            <person name="Togashi T."/>
            <person name="Oyama M."/>
            <person name="Hata H."/>
            <person name="Watanabe M."/>
            <person name="Komatsu T."/>
            <person name="Mizushima-Sugano J."/>
            <person name="Satoh T."/>
            <person name="Shirai Y."/>
            <person name="Takahashi Y."/>
            <person name="Nakagawa K."/>
            <person name="Okumura K."/>
            <person name="Nagase T."/>
            <person name="Nomura N."/>
            <person name="Kikuchi H."/>
            <person name="Masuho Y."/>
            <person name="Yamashita R."/>
            <person name="Nakai K."/>
            <person name="Yada T."/>
            <person name="Nakamura Y."/>
            <person name="Ohara O."/>
            <person name="Isogai T."/>
            <person name="Sugano S."/>
        </authorList>
    </citation>
    <scope>NUCLEOTIDE SEQUENCE [LARGE SCALE MRNA] (ISOFORMS 1 AND 3)</scope>
    <scope>VARIANTS VAL-143 AND PRO-203</scope>
    <source>
        <tissue>Corpus callosum</tissue>
        <tissue>Tongue</tissue>
    </source>
</reference>
<reference key="5">
    <citation type="submission" date="2004-06" db="EMBL/GenBank/DDBJ databases">
        <title>Cloning of human full open reading frames in Gateway(TM) system entry vector (pDONR201).</title>
        <authorList>
            <person name="Ebert L."/>
            <person name="Schick M."/>
            <person name="Neubert P."/>
            <person name="Schatten R."/>
            <person name="Henze S."/>
            <person name="Korn B."/>
        </authorList>
    </citation>
    <scope>NUCLEOTIDE SEQUENCE [LARGE SCALE MRNA] (ISOFORM 1)</scope>
    <scope>VARIANT PRO-203</scope>
</reference>
<reference key="6">
    <citation type="journal article" date="2004" name="Nature">
        <title>The DNA sequence and biology of human chromosome 19.</title>
        <authorList>
            <person name="Grimwood J."/>
            <person name="Gordon L.A."/>
            <person name="Olsen A.S."/>
            <person name="Terry A."/>
            <person name="Schmutz J."/>
            <person name="Lamerdin J.E."/>
            <person name="Hellsten U."/>
            <person name="Goodstein D."/>
            <person name="Couronne O."/>
            <person name="Tran-Gyamfi M."/>
            <person name="Aerts A."/>
            <person name="Altherr M."/>
            <person name="Ashworth L."/>
            <person name="Bajorek E."/>
            <person name="Black S."/>
            <person name="Branscomb E."/>
            <person name="Caenepeel S."/>
            <person name="Carrano A.V."/>
            <person name="Caoile C."/>
            <person name="Chan Y.M."/>
            <person name="Christensen M."/>
            <person name="Cleland C.A."/>
            <person name="Copeland A."/>
            <person name="Dalin E."/>
            <person name="Dehal P."/>
            <person name="Denys M."/>
            <person name="Detter J.C."/>
            <person name="Escobar J."/>
            <person name="Flowers D."/>
            <person name="Fotopulos D."/>
            <person name="Garcia C."/>
            <person name="Georgescu A.M."/>
            <person name="Glavina T."/>
            <person name="Gomez M."/>
            <person name="Gonzales E."/>
            <person name="Groza M."/>
            <person name="Hammon N."/>
            <person name="Hawkins T."/>
            <person name="Haydu L."/>
            <person name="Ho I."/>
            <person name="Huang W."/>
            <person name="Israni S."/>
            <person name="Jett J."/>
            <person name="Kadner K."/>
            <person name="Kimball H."/>
            <person name="Kobayashi A."/>
            <person name="Larionov V."/>
            <person name="Leem S.-H."/>
            <person name="Lopez F."/>
            <person name="Lou Y."/>
            <person name="Lowry S."/>
            <person name="Malfatti S."/>
            <person name="Martinez D."/>
            <person name="McCready P.M."/>
            <person name="Medina C."/>
            <person name="Morgan J."/>
            <person name="Nelson K."/>
            <person name="Nolan M."/>
            <person name="Ovcharenko I."/>
            <person name="Pitluck S."/>
            <person name="Pollard M."/>
            <person name="Popkie A.P."/>
            <person name="Predki P."/>
            <person name="Quan G."/>
            <person name="Ramirez L."/>
            <person name="Rash S."/>
            <person name="Retterer J."/>
            <person name="Rodriguez A."/>
            <person name="Rogers S."/>
            <person name="Salamov A."/>
            <person name="Salazar A."/>
            <person name="She X."/>
            <person name="Smith D."/>
            <person name="Slezak T."/>
            <person name="Solovyev V."/>
            <person name="Thayer N."/>
            <person name="Tice H."/>
            <person name="Tsai M."/>
            <person name="Ustaszewska A."/>
            <person name="Vo N."/>
            <person name="Wagner M."/>
            <person name="Wheeler J."/>
            <person name="Wu K."/>
            <person name="Xie G."/>
            <person name="Yang J."/>
            <person name="Dubchak I."/>
            <person name="Furey T.S."/>
            <person name="DeJong P."/>
            <person name="Dickson M."/>
            <person name="Gordon D."/>
            <person name="Eichler E.E."/>
            <person name="Pennacchio L.A."/>
            <person name="Richardson P."/>
            <person name="Stubbs L."/>
            <person name="Rokhsar D.S."/>
            <person name="Myers R.M."/>
            <person name="Rubin E.M."/>
            <person name="Lucas S.M."/>
        </authorList>
    </citation>
    <scope>NUCLEOTIDE SEQUENCE [LARGE SCALE GENOMIC DNA]</scope>
</reference>
<reference key="7">
    <citation type="submission" date="2005-07" db="EMBL/GenBank/DDBJ databases">
        <authorList>
            <person name="Mural R.J."/>
            <person name="Istrail S."/>
            <person name="Sutton G.G."/>
            <person name="Florea L."/>
            <person name="Halpern A.L."/>
            <person name="Mobarry C.M."/>
            <person name="Lippert R."/>
            <person name="Walenz B."/>
            <person name="Shatkay H."/>
            <person name="Dew I."/>
            <person name="Miller J.R."/>
            <person name="Flanigan M.J."/>
            <person name="Edwards N.J."/>
            <person name="Bolanos R."/>
            <person name="Fasulo D."/>
            <person name="Halldorsson B.V."/>
            <person name="Hannenhalli S."/>
            <person name="Turner R."/>
            <person name="Yooseph S."/>
            <person name="Lu F."/>
            <person name="Nusskern D.R."/>
            <person name="Shue B.C."/>
            <person name="Zheng X.H."/>
            <person name="Zhong F."/>
            <person name="Delcher A.L."/>
            <person name="Huson D.H."/>
            <person name="Kravitz S.A."/>
            <person name="Mouchard L."/>
            <person name="Reinert K."/>
            <person name="Remington K.A."/>
            <person name="Clark A.G."/>
            <person name="Waterman M.S."/>
            <person name="Eichler E.E."/>
            <person name="Adams M.D."/>
            <person name="Hunkapiller M.W."/>
            <person name="Myers E.W."/>
            <person name="Venter J.C."/>
        </authorList>
    </citation>
    <scope>NUCLEOTIDE SEQUENCE [LARGE SCALE GENOMIC DNA]</scope>
</reference>
<reference key="8">
    <citation type="journal article" date="2004" name="Genome Res.">
        <title>The status, quality, and expansion of the NIH full-length cDNA project: the Mammalian Gene Collection (MGC).</title>
        <authorList>
            <consortium name="The MGC Project Team"/>
        </authorList>
    </citation>
    <scope>NUCLEOTIDE SEQUENCE [LARGE SCALE MRNA] (ISOFORM 1)</scope>
    <source>
        <tissue>Pancreas</tissue>
    </source>
</reference>
<reference key="9">
    <citation type="submission" date="2003-03" db="EMBL/GenBank/DDBJ databases">
        <title>SNP search of PLA2G4C gene.</title>
        <authorList>
            <person name="Koyama K.S."/>
            <person name="Kimura T."/>
            <person name="Imai T."/>
        </authorList>
    </citation>
    <scope>NUCLEOTIDE SEQUENCE [GENOMIC DNA] OF 420-476</scope>
    <scope>VARIANT CYS-430</scope>
</reference>
<reference key="10">
    <citation type="journal article" date="2007" name="BMC Genomics">
        <title>The full-ORF clone resource of the German cDNA consortium.</title>
        <authorList>
            <person name="Bechtel S."/>
            <person name="Rosenfelder H."/>
            <person name="Duda A."/>
            <person name="Schmidt C.P."/>
            <person name="Ernst U."/>
            <person name="Wellenreuther R."/>
            <person name="Mehrle A."/>
            <person name="Schuster C."/>
            <person name="Bahr A."/>
            <person name="Bloecker H."/>
            <person name="Heubner D."/>
            <person name="Hoerlein A."/>
            <person name="Michel G."/>
            <person name="Wedler H."/>
            <person name="Koehrer K."/>
            <person name="Ottenwaelder B."/>
            <person name="Poustka A."/>
            <person name="Wiemann S."/>
            <person name="Schupp I."/>
        </authorList>
    </citation>
    <scope>NUCLEOTIDE SEQUENCE [LARGE SCALE MRNA] OF 443-541 (ISOFORM 1)</scope>
    <source>
        <tissue>Uterus</tissue>
    </source>
</reference>
<reference key="11">
    <citation type="journal article" date="1999" name="J. Biol. Chem.">
        <title>Molecular characterization of cytosolic phospholipase A2-beta.</title>
        <authorList>
            <person name="Song C."/>
            <person name="Chang X.J."/>
            <person name="Bean K.M."/>
            <person name="Proia M.S."/>
            <person name="Knopf J.L."/>
            <person name="Kriz R.W."/>
        </authorList>
    </citation>
    <scope>FUNCTION</scope>
    <scope>CATALYTIC ACTIVITY</scope>
</reference>
<reference key="12">
    <citation type="journal article" date="2003" name="Biochemistry">
        <title>Purification of recombinant human cPLA2 gamma and identification of C-terminal farnesylation, proteolytic processing, and carboxymethylation by MALDI-TOF-TOF analysis.</title>
        <authorList>
            <person name="Jenkins C.M."/>
            <person name="Han X."/>
            <person name="Yang J."/>
            <person name="Mancuso D.J."/>
            <person name="Sims H.F."/>
            <person name="Muslin A.J."/>
            <person name="Gross R.W."/>
        </authorList>
    </citation>
    <scope>CATALYTIC ACTIVITY</scope>
    <scope>ACTIVITY REGULATION</scope>
    <scope>SUBCELLULAR LOCATION</scope>
    <scope>ISOPRENYLATION AT CYS-538</scope>
    <scope>METHYLATION AT CYS-538</scope>
</reference>
<reference key="13">
    <citation type="journal article" date="2005" name="J. Biochem.">
        <title>Roles of C-terminal processing, and involvement in transacylation reaction of human group IVC phospholipase A2 (cPLA2gamma).</title>
        <authorList>
            <person name="Yamashita A."/>
            <person name="Kamata R."/>
            <person name="Kawagishi N."/>
            <person name="Nakanishi H."/>
            <person name="Suzuki H."/>
            <person name="Sugiura T."/>
            <person name="Waku K."/>
        </authorList>
    </citation>
    <scope>FUNCTION</scope>
    <scope>CATALYTIC ACTIVITY</scope>
    <scope>ACTIVITY REGULATION</scope>
    <scope>BIOPHYSICOCHEMICAL PROPERTIES</scope>
    <scope>SUBCELLULAR LOCATION</scope>
    <scope>MUTAGENESIS OF CYS-538</scope>
</reference>
<reference key="14">
    <citation type="journal article" date="2008" name="J. Proteome Res.">
        <title>Phosphoproteome of resting human platelets.</title>
        <authorList>
            <person name="Zahedi R.P."/>
            <person name="Lewandrowski U."/>
            <person name="Wiesner J."/>
            <person name="Wortelkamp S."/>
            <person name="Moebius J."/>
            <person name="Schuetz C."/>
            <person name="Walter U."/>
            <person name="Gambaryan S."/>
            <person name="Sickmann A."/>
        </authorList>
    </citation>
    <scope>IDENTIFICATION BY MASS SPECTROMETRY [LARGE SCALE ANALYSIS]</scope>
    <source>
        <tissue>Platelet</tissue>
    </source>
</reference>
<reference key="15">
    <citation type="journal article" date="2009" name="Biochim. Biophys. Acta">
        <title>Subcellular localization and lysophospholipase/transacylation activities of human group IVC phospholipase A2 (cPLA2gamma).</title>
        <authorList>
            <person name="Yamashita A."/>
            <person name="Tanaka K."/>
            <person name="Kamata R."/>
            <person name="Kumazawa T."/>
            <person name="Suzuki N."/>
            <person name="Koga H."/>
            <person name="Waku K."/>
            <person name="Sugiura T."/>
        </authorList>
    </citation>
    <scope>FUNCTION</scope>
    <scope>CATALYTIC ACTIVITY</scope>
    <scope>BIOPHYSICOCHEMICAL PROPERTIES</scope>
    <scope>ACTIVITY REGULATION</scope>
    <scope>SUBCELLULAR LOCATION</scope>
    <scope>MUTAGENESIS OF CYS-538</scope>
</reference>
<reference key="16">
    <citation type="journal article" date="2012" name="J. Virol.">
        <title>Cytosolic phospholipase A2 gamma is involved in hepatitis C virus replication and assembly.</title>
        <authorList>
            <person name="Xu S."/>
            <person name="Pei R."/>
            <person name="Guo M."/>
            <person name="Han Q."/>
            <person name="Lai J."/>
            <person name="Wang Y."/>
            <person name="Wu C."/>
            <person name="Zhou Y."/>
            <person name="Lu M."/>
            <person name="Chen X."/>
        </authorList>
    </citation>
    <scope>FUNCTION (MICROBIAL INFECTION)</scope>
    <scope>INDUCTION (MICROBIAL INFECTION)</scope>
    <scope>SUBUNIT (MICROBIAL INFECTION)</scope>
</reference>
<reference key="17">
    <citation type="journal article" date="2014" name="J. Proteomics">
        <title>An enzyme assisted RP-RPLC approach for in-depth analysis of human liver phosphoproteome.</title>
        <authorList>
            <person name="Bian Y."/>
            <person name="Song C."/>
            <person name="Cheng K."/>
            <person name="Dong M."/>
            <person name="Wang F."/>
            <person name="Huang J."/>
            <person name="Sun D."/>
            <person name="Wang L."/>
            <person name="Ye M."/>
            <person name="Zou H."/>
        </authorList>
    </citation>
    <scope>PHOSPHORYLATION [LARGE SCALE ANALYSIS] AT SER-337</scope>
    <scope>IDENTIFICATION BY MASS SPECTROMETRY [LARGE SCALE ANALYSIS]</scope>
    <source>
        <tissue>Liver</tissue>
    </source>
</reference>
<reference key="18">
    <citation type="journal article" date="2017" name="Biochim. Biophys. Acta">
        <title>Requirement of cytosolic phospholipase A2 gamma in lipid droplet formation.</title>
        <authorList>
            <person name="Su X."/>
            <person name="Liu S."/>
            <person name="Zhang X."/>
            <person name="Lam S.M."/>
            <person name="Hu X."/>
            <person name="Zhou Y."/>
            <person name="Chen J."/>
            <person name="Wang Y."/>
            <person name="Wu C."/>
            <person name="Shui G."/>
            <person name="Lu M."/>
            <person name="Pei R."/>
            <person name="Chen X."/>
        </authorList>
    </citation>
    <scope>FUNCTION</scope>
    <scope>FUNCTION (MICROBIAL INFECTION)</scope>
    <scope>SUBCELLULAR LOCATION</scope>
    <scope>REGION</scope>
    <scope>MUTAGENESIS OF ARG-54; SER-82; ASP-385 AND ARG-402</scope>
</reference>
<reference key="19">
    <citation type="journal article" date="2017" name="Nat. Commun.">
        <title>HTLV-1-induced leukotriene B4 secretion by T cells promotes T cell recruitment and virus propagation.</title>
        <authorList>
            <person name="Percher F."/>
            <person name="Curis C."/>
            <person name="Peres E."/>
            <person name="Artesi M."/>
            <person name="Rosewick N."/>
            <person name="Jeannin P."/>
            <person name="Gessain A."/>
            <person name="Gout O."/>
            <person name="Mahieux R."/>
            <person name="Ceccaldi P.E."/>
            <person name="Van den Broeke A."/>
            <person name="Duc Dodon M."/>
            <person name="Afonso P.V."/>
        </authorList>
    </citation>
    <scope>FUNCTION (MICROBIAL INFECTION)</scope>
    <scope>INDUCTION (MICROBIAL INFECTION)</scope>
</reference>
<protein>
    <recommendedName>
        <fullName>Cytosolic phospholipase A2 gamma</fullName>
        <shortName>cPLA2-gamma</shortName>
        <ecNumber evidence="2 3 4 11">3.1.1.4</ecNumber>
    </recommendedName>
    <alternativeName>
        <fullName>Cytosolic lysophospholipase</fullName>
        <ecNumber evidence="4 6 7">3.1.1.5</ecNumber>
    </alternativeName>
    <alternativeName>
        <fullName>Cytosolic lysophospholipid O-acyltransferase</fullName>
        <ecNumber evidence="7">2.3.1.-</ecNumber>
    </alternativeName>
    <alternativeName>
        <fullName>Phospholipase A2 group IVC</fullName>
    </alternativeName>
</protein>
<comment type="function">
    <text evidence="2 3 6 7 9 11">Calcium-independent phospholipase, lysophospholipase and O-acyltransferase involved in phospholipid remodeling with implications in endoplasmic reticulum membrane homeostasis and lipid droplet biogenesis (PubMed:10085124, PubMed:10358058, PubMed:19501189, PubMed:28336330, PubMed:9705332). Preferentially hydrolyzes the ester bond of the fatty acyl group attached at the sn-2 position of phospholipids with choline and ethanolamine head groups, producing lysophospholipids that are used in deacylation-reacylation cycles (PubMed:10085124, PubMed:10358058, PubMed:19501189, PubMed:28336330, PubMed:9705332). Transfers the sn-1 fatty acyl from one lysophospholipid molecule to the sn-2 position of another lysophospholipid to form diacyl, alkylacyl and alkenylacyl glycerophospholipids. Cleaves ester bonds but not alkyl or alkenyl ether bonds at sn-1 position of lysophospholipids (PubMed:15944408, PubMed:19501189). Catalyzes sn-2 fatty acyl transfer from phospholipids to the sn-2 position of 1-O-alkyl or 1-O-alkenyl lysophospholipids with lower efficiency (PubMed:15944408, PubMed:19501189). In response to dietary fatty acids, may play a role in the formation of nascent lipid droplets from the endoplasmic reticulum likely by regulating the phospholipid composition of these organelles (PubMed:28336330).</text>
</comment>
<comment type="function">
    <text evidence="8 9">(Microbial infection) May play a role in replication and assembly of human hepatitis C virus (HCV) (PubMed:23015700, PubMed:28336330). In response to HCV infection, promotes remodeling of host endoplasmic reticulum membranes to form organelle-like structures called membranous web, where HCV replication occur (PubMed:23015700). Can further mediate translocation of replication complexes to lipid droplets to enable virion assembly (PubMed:23015700, PubMed:28336330).</text>
</comment>
<comment type="function">
    <text evidence="10">(Microbial infection) May facilitate human T-lymphotropic virus type 1 (HTLV-1) infection by promoting leukotriene B4 (LTB4) biosynthesis. LTB4 acts as a chemoattractant for HTLV-1-infected CD4-positive T cells and favors cell to cell viral transmission.</text>
</comment>
<comment type="catalytic activity">
    <reaction evidence="2 3 4 11">
        <text>a 1,2-diacyl-sn-glycero-3-phosphocholine + H2O = a 1-acyl-sn-glycero-3-phosphocholine + a fatty acid + H(+)</text>
        <dbReference type="Rhea" id="RHEA:15801"/>
        <dbReference type="ChEBI" id="CHEBI:15377"/>
        <dbReference type="ChEBI" id="CHEBI:15378"/>
        <dbReference type="ChEBI" id="CHEBI:28868"/>
        <dbReference type="ChEBI" id="CHEBI:57643"/>
        <dbReference type="ChEBI" id="CHEBI:58168"/>
        <dbReference type="EC" id="3.1.1.4"/>
    </reaction>
    <physiologicalReaction direction="left-to-right" evidence="17 18 19 22">
        <dbReference type="Rhea" id="RHEA:15802"/>
    </physiologicalReaction>
</comment>
<comment type="catalytic activity">
    <reaction evidence="3 11">
        <text>a 1-O-alkyl-2-acyl-sn-glycero-3-phosphocholine + H2O = a 1-O-alkyl-sn-glycero-3-phosphocholine + a fatty acid + H(+)</text>
        <dbReference type="Rhea" id="RHEA:36231"/>
        <dbReference type="ChEBI" id="CHEBI:15377"/>
        <dbReference type="ChEBI" id="CHEBI:15378"/>
        <dbReference type="ChEBI" id="CHEBI:28868"/>
        <dbReference type="ChEBI" id="CHEBI:30909"/>
        <dbReference type="ChEBI" id="CHEBI:36702"/>
        <dbReference type="EC" id="3.1.1.4"/>
    </reaction>
    <physiologicalReaction direction="left-to-right" evidence="18 22">
        <dbReference type="Rhea" id="RHEA:36232"/>
    </physiologicalReaction>
</comment>
<comment type="catalytic activity">
    <reaction evidence="11">
        <text>1,2-dihexadecanoyl-sn-glycero-3-phosphocholine + H2O = 1-hexadecanoyl-sn-glycero-3-phosphocholine + hexadecanoate + H(+)</text>
        <dbReference type="Rhea" id="RHEA:41223"/>
        <dbReference type="ChEBI" id="CHEBI:7896"/>
        <dbReference type="ChEBI" id="CHEBI:15377"/>
        <dbReference type="ChEBI" id="CHEBI:15378"/>
        <dbReference type="ChEBI" id="CHEBI:72998"/>
        <dbReference type="ChEBI" id="CHEBI:72999"/>
    </reaction>
    <physiologicalReaction direction="left-to-right" evidence="22">
        <dbReference type="Rhea" id="RHEA:41224"/>
    </physiologicalReaction>
</comment>
<comment type="catalytic activity">
    <reaction evidence="11">
        <text>1-hexadecanoyl-2-(9Z-octadecenoyl)-sn-glycero-3-phosphocholine + H2O = 1-hexadecanoyl-sn-glycero-3-phosphocholine + (9Z)-octadecenoate + H(+)</text>
        <dbReference type="Rhea" id="RHEA:38779"/>
        <dbReference type="ChEBI" id="CHEBI:15377"/>
        <dbReference type="ChEBI" id="CHEBI:15378"/>
        <dbReference type="ChEBI" id="CHEBI:30823"/>
        <dbReference type="ChEBI" id="CHEBI:72998"/>
        <dbReference type="ChEBI" id="CHEBI:73001"/>
    </reaction>
    <physiologicalReaction direction="left-to-right" evidence="22">
        <dbReference type="Rhea" id="RHEA:38780"/>
    </physiologicalReaction>
</comment>
<comment type="catalytic activity">
    <reaction evidence="11">
        <text>1-hexadecanoyl-2-(9Z,12Z-octadecadienoyl)-sn-glycero-3-phosphocholine + H2O = (9Z,12Z)-octadecadienoate + 1-hexadecanoyl-sn-glycero-3-phosphocholine + H(+)</text>
        <dbReference type="Rhea" id="RHEA:40811"/>
        <dbReference type="ChEBI" id="CHEBI:15377"/>
        <dbReference type="ChEBI" id="CHEBI:15378"/>
        <dbReference type="ChEBI" id="CHEBI:30245"/>
        <dbReference type="ChEBI" id="CHEBI:72998"/>
        <dbReference type="ChEBI" id="CHEBI:73002"/>
    </reaction>
    <physiologicalReaction direction="left-to-right" evidence="22">
        <dbReference type="Rhea" id="RHEA:40812"/>
    </physiologicalReaction>
</comment>
<comment type="catalytic activity">
    <reaction evidence="2 3 4 11">
        <text>1-hexadecanoyl-2-(5Z,8Z,11Z,14Z-eicosatetraenoyl)-sn-glycero-3-phosphocholine + H2O = 1-hexadecanoyl-sn-glycero-3-phosphocholine + (5Z,8Z,11Z,14Z)-eicosatetraenoate + H(+)</text>
        <dbReference type="Rhea" id="RHEA:40427"/>
        <dbReference type="ChEBI" id="CHEBI:15377"/>
        <dbReference type="ChEBI" id="CHEBI:15378"/>
        <dbReference type="ChEBI" id="CHEBI:32395"/>
        <dbReference type="ChEBI" id="CHEBI:72998"/>
        <dbReference type="ChEBI" id="CHEBI:73003"/>
    </reaction>
    <physiologicalReaction direction="left-to-right" evidence="17 18 22">
        <dbReference type="Rhea" id="RHEA:40428"/>
    </physiologicalReaction>
</comment>
<comment type="catalytic activity">
    <reaction evidence="3 11">
        <text>1-O-hexadecyl-2-(5Z,8Z,11Z,14Z)-eicosatetraenoyl-sn-glycero-3-phosphocholine + H2O = 1-O-hexadecyl-sn-glycero-3-phosphocholine + (5Z,8Z,11Z,14Z)-eicosatetraenoate + H(+)</text>
        <dbReference type="Rhea" id="RHEA:41067"/>
        <dbReference type="ChEBI" id="CHEBI:15377"/>
        <dbReference type="ChEBI" id="CHEBI:15378"/>
        <dbReference type="ChEBI" id="CHEBI:32395"/>
        <dbReference type="ChEBI" id="CHEBI:55430"/>
        <dbReference type="ChEBI" id="CHEBI:64496"/>
    </reaction>
    <physiologicalReaction direction="left-to-right" evidence="18 22">
        <dbReference type="Rhea" id="RHEA:41068"/>
    </physiologicalReaction>
</comment>
<comment type="catalytic activity">
    <reaction evidence="3 11">
        <text>1-hexadecanoyl-2-(5Z,8Z,11Z,14Z-eicosatetraenoyl)-sn-glycero-3-phosphocholine + H2O = 2-(5Z,8Z,11Z,14Z)-eicosatetraenoyl-sn-glycero-3-phosphocholine + hexadecanoate + H(+)</text>
        <dbReference type="Rhea" id="RHEA:40571"/>
        <dbReference type="ChEBI" id="CHEBI:7896"/>
        <dbReference type="ChEBI" id="CHEBI:15377"/>
        <dbReference type="ChEBI" id="CHEBI:15378"/>
        <dbReference type="ChEBI" id="CHEBI:73003"/>
        <dbReference type="ChEBI" id="CHEBI:76079"/>
    </reaction>
    <physiologicalReaction direction="left-to-right" evidence="18 22">
        <dbReference type="Rhea" id="RHEA:40572"/>
    </physiologicalReaction>
</comment>
<comment type="catalytic activity">
    <reaction evidence="4 6 7">
        <text>a 1-acyl-sn-glycero-3-phosphocholine + H2O = sn-glycerol 3-phosphocholine + a fatty acid + H(+)</text>
        <dbReference type="Rhea" id="RHEA:15177"/>
        <dbReference type="ChEBI" id="CHEBI:15377"/>
        <dbReference type="ChEBI" id="CHEBI:15378"/>
        <dbReference type="ChEBI" id="CHEBI:16870"/>
        <dbReference type="ChEBI" id="CHEBI:28868"/>
        <dbReference type="ChEBI" id="CHEBI:58168"/>
        <dbReference type="EC" id="3.1.1.5"/>
    </reaction>
    <physiologicalReaction direction="left-to-right" evidence="19 20 21">
        <dbReference type="Rhea" id="RHEA:15178"/>
    </physiologicalReaction>
</comment>
<comment type="catalytic activity">
    <reaction evidence="4 6 7">
        <text>1-hexadecanoyl-sn-glycero-3-phosphocholine + H2O = sn-glycerol 3-phosphocholine + hexadecanoate + H(+)</text>
        <dbReference type="Rhea" id="RHEA:40435"/>
        <dbReference type="ChEBI" id="CHEBI:7896"/>
        <dbReference type="ChEBI" id="CHEBI:15377"/>
        <dbReference type="ChEBI" id="CHEBI:15378"/>
        <dbReference type="ChEBI" id="CHEBI:16870"/>
        <dbReference type="ChEBI" id="CHEBI:72998"/>
    </reaction>
    <physiologicalReaction direction="left-to-right" evidence="19 20 21">
        <dbReference type="Rhea" id="RHEA:40436"/>
    </physiologicalReaction>
</comment>
<comment type="catalytic activity">
    <reaction evidence="6 7">
        <text>2 1-hexadecanoyl-sn-glycero-3-phosphocholine = 1,2-dihexadecanoyl-sn-glycero-3-phosphocholine + sn-glycerol 3-phosphocholine</text>
        <dbReference type="Rhea" id="RHEA:40879"/>
        <dbReference type="ChEBI" id="CHEBI:16870"/>
        <dbReference type="ChEBI" id="CHEBI:72998"/>
        <dbReference type="ChEBI" id="CHEBI:72999"/>
    </reaction>
    <physiologicalReaction direction="left-to-right" evidence="20 21">
        <dbReference type="Rhea" id="RHEA:40880"/>
    </physiologicalReaction>
</comment>
<comment type="catalytic activity">
    <reaction evidence="7">
        <text>1-hexadecanoyl-sn-glycero-3-phosphoethanolamine + 1-hexadecanoyl-sn-glycero-3-phosphocholine = 1,2-dihexadecanoyl-sn-glycero-3-phosphoethanolamine + sn-glycerol 3-phosphocholine</text>
        <dbReference type="Rhea" id="RHEA:40899"/>
        <dbReference type="ChEBI" id="CHEBI:16870"/>
        <dbReference type="ChEBI" id="CHEBI:72998"/>
        <dbReference type="ChEBI" id="CHEBI:73004"/>
        <dbReference type="ChEBI" id="CHEBI:73005"/>
    </reaction>
    <physiologicalReaction direction="left-to-right" evidence="21">
        <dbReference type="Rhea" id="RHEA:40900"/>
    </physiologicalReaction>
</comment>
<comment type="catalytic activity">
    <reaction evidence="7">
        <text>1-hexadecanoyl-sn-glycero-3-phosphoethanolamine + 1-hexadecanoyl-sn-glycero-3-phosphocholine = sn-glycero-3-phosphoethanolamine + 1,2-dihexadecanoyl-sn-glycero-3-phosphocholine</text>
        <dbReference type="Rhea" id="RHEA:63764"/>
        <dbReference type="ChEBI" id="CHEBI:72998"/>
        <dbReference type="ChEBI" id="CHEBI:72999"/>
        <dbReference type="ChEBI" id="CHEBI:73004"/>
        <dbReference type="ChEBI" id="CHEBI:143890"/>
    </reaction>
    <physiologicalReaction direction="left-to-right" evidence="21">
        <dbReference type="Rhea" id="RHEA:63765"/>
    </physiologicalReaction>
</comment>
<comment type="catalytic activity">
    <reaction evidence="7">
        <text>2 1-hexadecanoyl-sn-glycero-3-phosphoethanolamine = 1,2-dihexadecanoyl-sn-glycero-3-phosphoethanolamine + sn-glycero-3-phosphoethanolamine</text>
        <dbReference type="Rhea" id="RHEA:63768"/>
        <dbReference type="ChEBI" id="CHEBI:73004"/>
        <dbReference type="ChEBI" id="CHEBI:73005"/>
        <dbReference type="ChEBI" id="CHEBI:143890"/>
    </reaction>
    <physiologicalReaction direction="left-to-right" evidence="21">
        <dbReference type="Rhea" id="RHEA:63769"/>
    </physiologicalReaction>
</comment>
<comment type="catalytic activity">
    <reaction evidence="7">
        <text>1-O-hexadecyl-sn-glycero-3-phosphocholine + 1-hexadecanoyl-sn-glycero-3-phosphocholine = 1-O-hexadecyl-2-hexadecanoyl-sn-glycero-3-phosphocholine + sn-glycerol 3-phosphocholine</text>
        <dbReference type="Rhea" id="RHEA:63656"/>
        <dbReference type="ChEBI" id="CHEBI:16870"/>
        <dbReference type="ChEBI" id="CHEBI:64496"/>
        <dbReference type="ChEBI" id="CHEBI:72744"/>
        <dbReference type="ChEBI" id="CHEBI:72998"/>
    </reaction>
    <physiologicalReaction direction="left-to-right" evidence="21">
        <dbReference type="Rhea" id="RHEA:63657"/>
    </physiologicalReaction>
</comment>
<comment type="catalytic activity">
    <reaction evidence="7">
        <text>a 1-O-(1Z-alkenyl)-sn-glycero-3-phosphoethanolamine + 1-hexadecanoyl-sn-glycero-3-phosphocholine = 1-O-(1Z)-alkenyl-2-hexadecanoyl-sn-glycero-3-phosphoethanolamine + sn-glycerol 3-phosphocholine</text>
        <dbReference type="Rhea" id="RHEA:63772"/>
        <dbReference type="ChEBI" id="CHEBI:16870"/>
        <dbReference type="ChEBI" id="CHEBI:72998"/>
        <dbReference type="ChEBI" id="CHEBI:77288"/>
        <dbReference type="ChEBI" id="CHEBI:77303"/>
    </reaction>
    <physiologicalReaction direction="left-to-right" evidence="21">
        <dbReference type="Rhea" id="RHEA:63773"/>
    </physiologicalReaction>
</comment>
<comment type="catalytic activity">
    <reaction evidence="7">
        <text>1-O-hexadecyl-sn-glycero-3-phosphocholine + 1-hexadecanoyl-sn-glycero-3-phosphoethanolamine = 1-O-hexadecyl-2-hexadecanoyl-sn-glycero-3-phosphocholine + sn-glycero-3-phosphoethanolamine</text>
        <dbReference type="Rhea" id="RHEA:63760"/>
        <dbReference type="ChEBI" id="CHEBI:64496"/>
        <dbReference type="ChEBI" id="CHEBI:72744"/>
        <dbReference type="ChEBI" id="CHEBI:73004"/>
        <dbReference type="ChEBI" id="CHEBI:143890"/>
    </reaction>
    <physiologicalReaction direction="left-to-right" evidence="21">
        <dbReference type="Rhea" id="RHEA:63761"/>
    </physiologicalReaction>
</comment>
<comment type="catalytic activity">
    <reaction evidence="7">
        <text>1-octadecanoyl-2-(5Z,8Z,11Z,14Z)-eicosatetraenoyl-sn-glycero-3-phosphoethanolamine + 1-hexadecanoyl-sn-glycero-3-phosphocholine = 1-octadecanoyl-sn-glycero-3-phosphoethanolamine + 1-hexadecanoyl-2-(5Z,8Z,11Z,14Z-eicosatetraenoyl)-sn-glycero-3-phosphocholine</text>
        <dbReference type="Rhea" id="RHEA:63788"/>
        <dbReference type="ChEBI" id="CHEBI:72998"/>
        <dbReference type="ChEBI" id="CHEBI:73003"/>
        <dbReference type="ChEBI" id="CHEBI:75036"/>
        <dbReference type="ChEBI" id="CHEBI:78268"/>
    </reaction>
    <physiologicalReaction direction="left-to-right" evidence="21">
        <dbReference type="Rhea" id="RHEA:63789"/>
    </physiologicalReaction>
</comment>
<comment type="catalytic activity">
    <reaction evidence="6 7">
        <text>1-octadecanoyl-2-(5Z,8Z,11Z,14Z)-eicosatetraenoyl-sn-glycero-3-phosphoethanolamine + 1-O-hexadecyl-sn-glycero-3-phosphocholine = 1-octadecanoyl-sn-glycero-3-phosphoethanolamine + 1-O-hexadecyl-2-(5Z,8Z,11Z,14Z)-eicosatetraenoyl-sn-glycero-3-phosphocholine</text>
        <dbReference type="Rhea" id="RHEA:63776"/>
        <dbReference type="ChEBI" id="CHEBI:55430"/>
        <dbReference type="ChEBI" id="CHEBI:64496"/>
        <dbReference type="ChEBI" id="CHEBI:75036"/>
        <dbReference type="ChEBI" id="CHEBI:78268"/>
    </reaction>
    <physiologicalReaction direction="left-to-right" evidence="20 21">
        <dbReference type="Rhea" id="RHEA:63777"/>
    </physiologicalReaction>
</comment>
<comment type="catalytic activity">
    <reaction evidence="6 7">
        <text>1-hexadecanoyl-2-(9Z,12Z-octadecadienoyl)-sn-glycero-3-phosphocholine + a 1-O-(1Z-alkenyl)-sn-glycero-3-phosphoethanolamine = 1-O-(1Z-alkenyl)-2-(9Z,12Z-octadecadienoyl)-sn-glycero-3-phosphoethanolamine + 1-hexadecanoyl-sn-glycero-3-phosphocholine</text>
        <dbReference type="Rhea" id="RHEA:63784"/>
        <dbReference type="ChEBI" id="CHEBI:72998"/>
        <dbReference type="ChEBI" id="CHEBI:73002"/>
        <dbReference type="ChEBI" id="CHEBI:77288"/>
        <dbReference type="ChEBI" id="CHEBI:149549"/>
    </reaction>
    <physiologicalReaction direction="left-to-right" evidence="20 21">
        <dbReference type="Rhea" id="RHEA:63785"/>
    </physiologicalReaction>
</comment>
<comment type="catalytic activity">
    <reaction evidence="6">
        <text>1-hexadecanoyl-2-(5Z,8Z,11Z,14Z-eicosatetraenoyl)-sn-glycero-3-phosphocholine + a 1-O-(1Z-alkenyl)-sn-glycero-3-phosphoethanolamine = 1-O-(1Z)-alkenyl-2-(5Z,8Z,11Z,14Z)-eicosatetraenoyl-sn-glycero-3-phosphoethanolamine + 1-hexadecanoyl-sn-glycero-3-phosphocholine</text>
        <dbReference type="Rhea" id="RHEA:63780"/>
        <dbReference type="ChEBI" id="CHEBI:72998"/>
        <dbReference type="ChEBI" id="CHEBI:73003"/>
        <dbReference type="ChEBI" id="CHEBI:77288"/>
        <dbReference type="ChEBI" id="CHEBI:77295"/>
    </reaction>
    <physiologicalReaction direction="left-to-right" evidence="20">
        <dbReference type="Rhea" id="RHEA:63781"/>
    </physiologicalReaction>
</comment>
<comment type="activity regulation">
    <text evidence="2 4 7 11">Not regulated by calcium, coenzyme A or ATP (PubMed:10085124, PubMed:15944408, PubMed:9705332). Lysophospholipase activity is inhibited by palmitoyl-CoA (PubMed:14529291). Lysophospholipase and O-acyltransferase activities are inhibited by methylarachidonoylfluorophosphonate (PubMed:19501189). Lysophospholipase activity is inhibited by phosphatidate or lysophosphatidate (PubMed:19501189). O-acyltransferase activity is up-regulated at low concentration (10-20 uM) of phosphatidate or lysophosphatidate, but inhibited at higher concentrations (PubMed:19501189).</text>
</comment>
<comment type="biophysicochemical properties">
    <kinetics>
        <KM evidence="6">40 uM for 1-O-hexadecyl-sn-glycero-3-phosphocholine (O-acyltransferase activity)</KM>
        <Vmax evidence="2">218.0 pmol/min/mg enzyme</Vmax>
    </kinetics>
    <phDependence>
        <text evidence="7">Optimum pH is 6.5 for lysophospholipase activity, and 8-9 for O-acyltransferase activity.</text>
    </phDependence>
    <temperatureDependence>
        <text evidence="7">Optimum temperature is 40 degrees Celsius for lysophospholipase activity, and 50 degrees Celsius for O-acyltransferase activity. Lysophospholipase activity is present even at 0 degrees Celsius and its rate increases with temperature up to 40 degrees Celsius. O-acyltransferase activity is low below 25 degrees Celsius, but increases sharply between 30 and 40 degrees Celsius and peaked near 50 degrees Celsius.</text>
    </temperatureDependence>
</comment>
<comment type="subunit">
    <text evidence="8">(Microbial infection) Interacts with HCV non-structural protein 4B/NS4B; this interaction likely initiates the recruitment of replication complexes to lipid droplets.</text>
</comment>
<comment type="interaction">
    <interactant intactId="EBI-25848809">
        <id>Q9UP65</id>
    </interactant>
    <interactant intactId="EBI-466029">
        <id>P42858</id>
        <label>HTT</label>
    </interactant>
    <organismsDiffer>false</organismsDiffer>
    <experiments>12</experiments>
</comment>
<comment type="subcellular location">
    <subcellularLocation>
        <location evidence="2 4 11">Cell membrane</location>
        <topology evidence="2 4 11">Lipid-anchor</topology>
    </subcellularLocation>
    <subcellularLocation>
        <location evidence="6 7 9">Endoplasmic reticulum membrane</location>
        <topology>Lipid-anchor</topology>
    </subcellularLocation>
    <subcellularLocation>
        <location evidence="6 7">Mitochondrion membrane</location>
        <topology>Lipid-anchor</topology>
    </subcellularLocation>
    <subcellularLocation>
        <location evidence="9">Lipid droplet</location>
    </subcellularLocation>
    <text evidence="9">Translocates from endoplasmic reticulum to lipid droplets in response to oleate.</text>
</comment>
<comment type="alternative products">
    <event type="alternative splicing"/>
    <isoform>
        <id>Q9UP65-1</id>
        <name>1</name>
        <sequence type="displayed"/>
    </isoform>
    <isoform>
        <id>Q9UP65-2</id>
        <name>2</name>
        <sequence type="described" ref="VSP_045850"/>
    </isoform>
    <isoform>
        <id>Q9UP65-3</id>
        <name>3</name>
        <sequence type="described" ref="VSP_045849"/>
    </isoform>
</comment>
<comment type="tissue specificity">
    <text evidence="2 11">Highly expressed in heart and skeletal muscle.</text>
</comment>
<comment type="induction">
    <text evidence="8">(Microbial infection) Up-regulated by HCV.</text>
</comment>
<comment type="induction">
    <text evidence="10">(Microbial infection) Transcriptionally up-regulated by HTLV-1 Tax.</text>
</comment>
<sequence>MGSSEVSIIPGLQKEEKAAVERRRLHVLKALKKLRIEADEAPVVAVLGSGGGLRAHIACLGVLSEMKEQGLLDAVTYLAGVSGSTWAISSLYTNDGDMEALEADLKHRFTRQEWDLAKSLQKTIQAARSENYSLTDFWAYMVISKQTRELPESHLSNMKKPVEEGTLPYPIFAAIDNDLQPSWQEARAPETWFEFTPHHAGFSALGAFVSITHFGSKFKKGRLVRTHPERDLTFLRGLWGSALGNTEVIREYIFDQLRNLTLKGLWRRAVANAKSIGHLIFARLLRLQESSQGEHPPPEDEGGEPEHTWLTEMLENWTRTSLEKQEQPHEDPERKGSLSNLMDFVKKTGICASKWEWGTTHNFLYKHGGIRDKIMSSRKHLHLVDAGLAINTPFPLVLPPTREVHLILSFDFSAGDPFETIRATTDYCRRHKIPFPQVEEAELDLWSKAPASCYILKGETGPVVMHFPLFNIDACGGDIEAWSDTYDTFKLADTYTLDVVVLLLALAKKNVRENKKKILRELMNVAGLYYPKDSARSCCLA</sequence>
<accession>Q9UP65</accession>
<accession>B2RB71</accession>
<accession>B4DI40</accession>
<accession>O75457</accession>
<accession>Q6IBI8</accession>
<accession>Q9UG68</accession>
<organism>
    <name type="scientific">Homo sapiens</name>
    <name type="common">Human</name>
    <dbReference type="NCBI Taxonomy" id="9606"/>
    <lineage>
        <taxon>Eukaryota</taxon>
        <taxon>Metazoa</taxon>
        <taxon>Chordata</taxon>
        <taxon>Craniata</taxon>
        <taxon>Vertebrata</taxon>
        <taxon>Euteleostomi</taxon>
        <taxon>Mammalia</taxon>
        <taxon>Eutheria</taxon>
        <taxon>Euarchontoglires</taxon>
        <taxon>Primates</taxon>
        <taxon>Haplorrhini</taxon>
        <taxon>Catarrhini</taxon>
        <taxon>Hominidae</taxon>
        <taxon>Homo</taxon>
    </lineage>
</organism>